<geneLocation type="chloroplast"/>
<reference key="1">
    <citation type="journal article" date="2006" name="Plant Cell Rep.">
        <title>The complete chloroplast genome sequences of Solanum tuberosum and comparative analysis with Solanaceae species identified the presence of a 241-bp deletion in cultivated potato chloroplast DNA sequence.</title>
        <authorList>
            <person name="Chung H.-J."/>
            <person name="Jung J.D."/>
            <person name="Park H.-W."/>
            <person name="Kim J.-H."/>
            <person name="Cha H.W."/>
            <person name="Min S.R."/>
            <person name="Jeong W.-J."/>
            <person name="Liu J.R."/>
        </authorList>
    </citation>
    <scope>NUCLEOTIDE SEQUENCE [LARGE SCALE GENOMIC DNA]</scope>
    <source>
        <strain>cv. Desiree</strain>
    </source>
</reference>
<reference key="2">
    <citation type="submission" date="2006-02" db="EMBL/GenBank/DDBJ databases">
        <title>Complete chloroplast genome sequences of Solanum tuberosum cultivar Desiree and comparative analyses with other Solanaceae genomes.</title>
        <authorList>
            <person name="Gargano D."/>
            <person name="Scotti N."/>
            <person name="Vezzi A."/>
            <person name="Bilardi A."/>
            <person name="Valle G."/>
            <person name="Grillo S."/>
            <person name="Cardi T."/>
        </authorList>
    </citation>
    <scope>NUCLEOTIDE SEQUENCE [LARGE SCALE GENOMIC DNA]</scope>
    <source>
        <strain>cv. Desiree</strain>
    </source>
</reference>
<organism>
    <name type="scientific">Solanum tuberosum</name>
    <name type="common">Potato</name>
    <dbReference type="NCBI Taxonomy" id="4113"/>
    <lineage>
        <taxon>Eukaryota</taxon>
        <taxon>Viridiplantae</taxon>
        <taxon>Streptophyta</taxon>
        <taxon>Embryophyta</taxon>
        <taxon>Tracheophyta</taxon>
        <taxon>Spermatophyta</taxon>
        <taxon>Magnoliopsida</taxon>
        <taxon>eudicotyledons</taxon>
        <taxon>Gunneridae</taxon>
        <taxon>Pentapetalae</taxon>
        <taxon>asterids</taxon>
        <taxon>lamiids</taxon>
        <taxon>Solanales</taxon>
        <taxon>Solanaceae</taxon>
        <taxon>Solanoideae</taxon>
        <taxon>Solaneae</taxon>
        <taxon>Solanum</taxon>
    </lineage>
</organism>
<protein>
    <recommendedName>
        <fullName evidence="1">Protein PsbN</fullName>
    </recommendedName>
</protein>
<gene>
    <name evidence="1" type="primary">psbN</name>
</gene>
<proteinExistence type="inferred from homology"/>
<keyword id="KW-0150">Chloroplast</keyword>
<keyword id="KW-0472">Membrane</keyword>
<keyword id="KW-0934">Plastid</keyword>
<keyword id="KW-1185">Reference proteome</keyword>
<keyword id="KW-0793">Thylakoid</keyword>
<keyword id="KW-0812">Transmembrane</keyword>
<keyword id="KW-1133">Transmembrane helix</keyword>
<evidence type="ECO:0000255" key="1">
    <source>
        <dbReference type="HAMAP-Rule" id="MF_00293"/>
    </source>
</evidence>
<sequence>METATLVAIFISGLLVSFTGYALYTAFGQPSQQLRDPFEEHGD</sequence>
<name>PSBN_SOLTU</name>
<feature type="chain" id="PRO_0000232779" description="Protein PsbN">
    <location>
        <begin position="1"/>
        <end position="43"/>
    </location>
</feature>
<feature type="transmembrane region" description="Helical" evidence="1">
    <location>
        <begin position="7"/>
        <end position="27"/>
    </location>
</feature>
<accession>Q2VEF2</accession>
<dbReference type="EMBL" id="DQ231562">
    <property type="protein sequence ID" value="ABB90067.1"/>
    <property type="molecule type" value="Genomic_DNA"/>
</dbReference>
<dbReference type="EMBL" id="DQ386163">
    <property type="protein sequence ID" value="ABD47084.1"/>
    <property type="molecule type" value="Genomic_DNA"/>
</dbReference>
<dbReference type="RefSeq" id="YP_635667.1">
    <property type="nucleotide sequence ID" value="NC_008096.2"/>
</dbReference>
<dbReference type="SMR" id="Q2VEF2"/>
<dbReference type="FunCoup" id="Q2VEF2">
    <property type="interactions" value="42"/>
</dbReference>
<dbReference type="STRING" id="4113.Q2VEF2"/>
<dbReference type="GeneID" id="4099872"/>
<dbReference type="KEGG" id="sot:4099872"/>
<dbReference type="InParanoid" id="Q2VEF2"/>
<dbReference type="OrthoDB" id="1860403at2759"/>
<dbReference type="Proteomes" id="UP000011115">
    <property type="component" value="Unassembled WGS sequence"/>
</dbReference>
<dbReference type="GO" id="GO:0009535">
    <property type="term" value="C:chloroplast thylakoid membrane"/>
    <property type="evidence" value="ECO:0007669"/>
    <property type="project" value="UniProtKB-SubCell"/>
</dbReference>
<dbReference type="GO" id="GO:0015979">
    <property type="term" value="P:photosynthesis"/>
    <property type="evidence" value="ECO:0007669"/>
    <property type="project" value="InterPro"/>
</dbReference>
<dbReference type="HAMAP" id="MF_00293">
    <property type="entry name" value="PSII_PsbN"/>
    <property type="match status" value="1"/>
</dbReference>
<dbReference type="InterPro" id="IPR003398">
    <property type="entry name" value="PSII_PsbN"/>
</dbReference>
<dbReference type="PANTHER" id="PTHR35326">
    <property type="entry name" value="PROTEIN PSBN"/>
    <property type="match status" value="1"/>
</dbReference>
<dbReference type="PANTHER" id="PTHR35326:SF3">
    <property type="entry name" value="PROTEIN PSBN"/>
    <property type="match status" value="1"/>
</dbReference>
<dbReference type="Pfam" id="PF02468">
    <property type="entry name" value="PsbN"/>
    <property type="match status" value="1"/>
</dbReference>
<comment type="function">
    <text evidence="1">May play a role in photosystem I and II biogenesis.</text>
</comment>
<comment type="subcellular location">
    <subcellularLocation>
        <location evidence="1">Plastid</location>
        <location evidence="1">Chloroplast thylakoid membrane</location>
        <topology evidence="1">Single-pass membrane protein</topology>
    </subcellularLocation>
</comment>
<comment type="similarity">
    <text evidence="1">Belongs to the PsbN family.</text>
</comment>
<comment type="caution">
    <text evidence="1">Originally thought to be a component of PSII; based on experiments in Synechocystis, N.tabacum and barley, and its absence from PSII in T.elongatus and T.vulcanus, this is probably not true.</text>
</comment>